<reference key="1">
    <citation type="submission" date="2006-12" db="EMBL/GenBank/DDBJ databases">
        <title>Complete sequence of Halorhodospira halophila SL1.</title>
        <authorList>
            <consortium name="US DOE Joint Genome Institute"/>
            <person name="Copeland A."/>
            <person name="Lucas S."/>
            <person name="Lapidus A."/>
            <person name="Barry K."/>
            <person name="Detter J.C."/>
            <person name="Glavina del Rio T."/>
            <person name="Hammon N."/>
            <person name="Israni S."/>
            <person name="Dalin E."/>
            <person name="Tice H."/>
            <person name="Pitluck S."/>
            <person name="Saunders E."/>
            <person name="Brettin T."/>
            <person name="Bruce D."/>
            <person name="Han C."/>
            <person name="Tapia R."/>
            <person name="Schmutz J."/>
            <person name="Larimer F."/>
            <person name="Land M."/>
            <person name="Hauser L."/>
            <person name="Kyrpides N."/>
            <person name="Mikhailova N."/>
            <person name="Hoff W."/>
            <person name="Richardson P."/>
        </authorList>
    </citation>
    <scope>NUCLEOTIDE SEQUENCE [LARGE SCALE GENOMIC DNA]</scope>
    <source>
        <strain>DSM 244 / SL1</strain>
    </source>
</reference>
<sequence length="711" mass="76888">MAEPTATREQAQQRMAQLRGEISEHDYHYYVLDRPTISDAEYDALFRELQRLEAAYPDLVSSDSPTQRVAGTAQEGFEAVVHDTPMLSLDNAFEADDLVDFDRRIRDRLGVASVVYTGEPKLDGISLSLTYQDGELVRAGTRGDGHTGEDVTANVRTLRSVPLRLRGDGYPGRLEVRGEVVIRKEDFERLNQARLDAGERPFANPRNAAAGSLRQLDPRITARRPLTLFTFGVGDPLALGVESHWQVLECLAGWGFRTTAPLEHLEGVSACQAYRDRLIEERDALPFEIDGAVFKVDDLAVREQLGFTARAPRWALAFKLPAREATTVVEAIVPSVGRTGKITPLARLQPVEVSGVTVARASLHNADELARMDVREGDTVMVRRAGDVIPQITDVVLAKRPEGAQPWRFEERVQACPECGSAVQRIEGEAAHRCVGGLYCPAQREGAILHFASRRALDIDGLGEKIVEQLVAKGLVVDLADLFRLGHAQLAGLERMGDKSADNLLAALDRARSTTLARFLYALGIPHVGEVTARRLAEAAYGLMVAVPRGDRAALRAAAGLDAQTAITSEALLRVMAAPADDLEAIEDVGPVVARAIAGFFAEPHNRQVVDHLCAAGVHWPEPDPPEQAESVSSLAGRAFVVTGTLETMTRDEAKAAIEACGGRVTGSVSRKTDYLVAGADAGSKLNKARELGVEVVNESGLRELLAGAGA</sequence>
<organism>
    <name type="scientific">Halorhodospira halophila (strain DSM 244 / SL1)</name>
    <name type="common">Ectothiorhodospira halophila (strain DSM 244 / SL1)</name>
    <dbReference type="NCBI Taxonomy" id="349124"/>
    <lineage>
        <taxon>Bacteria</taxon>
        <taxon>Pseudomonadati</taxon>
        <taxon>Pseudomonadota</taxon>
        <taxon>Gammaproteobacteria</taxon>
        <taxon>Chromatiales</taxon>
        <taxon>Ectothiorhodospiraceae</taxon>
        <taxon>Halorhodospira</taxon>
    </lineage>
</organism>
<evidence type="ECO:0000255" key="1">
    <source>
        <dbReference type="HAMAP-Rule" id="MF_01588"/>
    </source>
</evidence>
<dbReference type="EC" id="6.5.1.2" evidence="1"/>
<dbReference type="EMBL" id="CP000544">
    <property type="protein sequence ID" value="ABM62642.1"/>
    <property type="molecule type" value="Genomic_DNA"/>
</dbReference>
<dbReference type="RefSeq" id="WP_011814664.1">
    <property type="nucleotide sequence ID" value="NC_008789.1"/>
</dbReference>
<dbReference type="SMR" id="A1WY80"/>
<dbReference type="STRING" id="349124.Hhal_1878"/>
<dbReference type="KEGG" id="hha:Hhal_1878"/>
<dbReference type="eggNOG" id="COG0272">
    <property type="taxonomic scope" value="Bacteria"/>
</dbReference>
<dbReference type="HOGENOM" id="CLU_007764_2_1_6"/>
<dbReference type="Proteomes" id="UP000000647">
    <property type="component" value="Chromosome"/>
</dbReference>
<dbReference type="GO" id="GO:0005829">
    <property type="term" value="C:cytosol"/>
    <property type="evidence" value="ECO:0007669"/>
    <property type="project" value="TreeGrafter"/>
</dbReference>
<dbReference type="GO" id="GO:0003677">
    <property type="term" value="F:DNA binding"/>
    <property type="evidence" value="ECO:0007669"/>
    <property type="project" value="InterPro"/>
</dbReference>
<dbReference type="GO" id="GO:0003911">
    <property type="term" value="F:DNA ligase (NAD+) activity"/>
    <property type="evidence" value="ECO:0007669"/>
    <property type="project" value="UniProtKB-UniRule"/>
</dbReference>
<dbReference type="GO" id="GO:0046872">
    <property type="term" value="F:metal ion binding"/>
    <property type="evidence" value="ECO:0007669"/>
    <property type="project" value="UniProtKB-KW"/>
</dbReference>
<dbReference type="GO" id="GO:0006281">
    <property type="term" value="P:DNA repair"/>
    <property type="evidence" value="ECO:0007669"/>
    <property type="project" value="UniProtKB-KW"/>
</dbReference>
<dbReference type="GO" id="GO:0006260">
    <property type="term" value="P:DNA replication"/>
    <property type="evidence" value="ECO:0007669"/>
    <property type="project" value="UniProtKB-KW"/>
</dbReference>
<dbReference type="CDD" id="cd00114">
    <property type="entry name" value="LIGANc"/>
    <property type="match status" value="1"/>
</dbReference>
<dbReference type="FunFam" id="1.10.150.20:FF:000007">
    <property type="entry name" value="DNA ligase"/>
    <property type="match status" value="1"/>
</dbReference>
<dbReference type="FunFam" id="1.10.287.610:FF:000002">
    <property type="entry name" value="DNA ligase"/>
    <property type="match status" value="1"/>
</dbReference>
<dbReference type="FunFam" id="2.40.50.140:FF:000012">
    <property type="entry name" value="DNA ligase"/>
    <property type="match status" value="1"/>
</dbReference>
<dbReference type="FunFam" id="3.30.470.30:FF:000001">
    <property type="entry name" value="DNA ligase"/>
    <property type="match status" value="1"/>
</dbReference>
<dbReference type="Gene3D" id="6.20.10.30">
    <property type="match status" value="1"/>
</dbReference>
<dbReference type="Gene3D" id="1.10.150.20">
    <property type="entry name" value="5' to 3' exonuclease, C-terminal subdomain"/>
    <property type="match status" value="2"/>
</dbReference>
<dbReference type="Gene3D" id="3.40.50.10190">
    <property type="entry name" value="BRCT domain"/>
    <property type="match status" value="1"/>
</dbReference>
<dbReference type="Gene3D" id="3.30.470.30">
    <property type="entry name" value="DNA ligase/mRNA capping enzyme"/>
    <property type="match status" value="1"/>
</dbReference>
<dbReference type="Gene3D" id="1.10.287.610">
    <property type="entry name" value="Helix hairpin bin"/>
    <property type="match status" value="1"/>
</dbReference>
<dbReference type="Gene3D" id="2.40.50.140">
    <property type="entry name" value="Nucleic acid-binding proteins"/>
    <property type="match status" value="1"/>
</dbReference>
<dbReference type="HAMAP" id="MF_01588">
    <property type="entry name" value="DNA_ligase_A"/>
    <property type="match status" value="1"/>
</dbReference>
<dbReference type="InterPro" id="IPR001357">
    <property type="entry name" value="BRCT_dom"/>
</dbReference>
<dbReference type="InterPro" id="IPR036420">
    <property type="entry name" value="BRCT_dom_sf"/>
</dbReference>
<dbReference type="InterPro" id="IPR041663">
    <property type="entry name" value="DisA/LigA_HHH"/>
</dbReference>
<dbReference type="InterPro" id="IPR001679">
    <property type="entry name" value="DNA_ligase"/>
</dbReference>
<dbReference type="InterPro" id="IPR018239">
    <property type="entry name" value="DNA_ligase_AS"/>
</dbReference>
<dbReference type="InterPro" id="IPR033136">
    <property type="entry name" value="DNA_ligase_CS"/>
</dbReference>
<dbReference type="InterPro" id="IPR013839">
    <property type="entry name" value="DNAligase_adenylation"/>
</dbReference>
<dbReference type="InterPro" id="IPR013840">
    <property type="entry name" value="DNAligase_N"/>
</dbReference>
<dbReference type="InterPro" id="IPR003583">
    <property type="entry name" value="Hlx-hairpin-Hlx_DNA-bd_motif"/>
</dbReference>
<dbReference type="InterPro" id="IPR012340">
    <property type="entry name" value="NA-bd_OB-fold"/>
</dbReference>
<dbReference type="InterPro" id="IPR004150">
    <property type="entry name" value="NAD_DNA_ligase_OB"/>
</dbReference>
<dbReference type="InterPro" id="IPR010994">
    <property type="entry name" value="RuvA_2-like"/>
</dbReference>
<dbReference type="InterPro" id="IPR004149">
    <property type="entry name" value="Znf_DNAligase_C4"/>
</dbReference>
<dbReference type="NCBIfam" id="TIGR00575">
    <property type="entry name" value="dnlj"/>
    <property type="match status" value="1"/>
</dbReference>
<dbReference type="NCBIfam" id="NF005932">
    <property type="entry name" value="PRK07956.1"/>
    <property type="match status" value="1"/>
</dbReference>
<dbReference type="PANTHER" id="PTHR23389">
    <property type="entry name" value="CHROMOSOME TRANSMISSION FIDELITY FACTOR 18"/>
    <property type="match status" value="1"/>
</dbReference>
<dbReference type="PANTHER" id="PTHR23389:SF9">
    <property type="entry name" value="DNA LIGASE"/>
    <property type="match status" value="1"/>
</dbReference>
<dbReference type="Pfam" id="PF00533">
    <property type="entry name" value="BRCT"/>
    <property type="match status" value="1"/>
</dbReference>
<dbReference type="Pfam" id="PF01653">
    <property type="entry name" value="DNA_ligase_aden"/>
    <property type="match status" value="1"/>
</dbReference>
<dbReference type="Pfam" id="PF03120">
    <property type="entry name" value="DNA_ligase_OB"/>
    <property type="match status" value="1"/>
</dbReference>
<dbReference type="Pfam" id="PF03119">
    <property type="entry name" value="DNA_ligase_ZBD"/>
    <property type="match status" value="1"/>
</dbReference>
<dbReference type="Pfam" id="PF12826">
    <property type="entry name" value="HHH_2"/>
    <property type="match status" value="1"/>
</dbReference>
<dbReference type="Pfam" id="PF14520">
    <property type="entry name" value="HHH_5"/>
    <property type="match status" value="1"/>
</dbReference>
<dbReference type="Pfam" id="PF22745">
    <property type="entry name" value="Nlig-Ia"/>
    <property type="match status" value="1"/>
</dbReference>
<dbReference type="PIRSF" id="PIRSF001604">
    <property type="entry name" value="LigA"/>
    <property type="match status" value="1"/>
</dbReference>
<dbReference type="SMART" id="SM00292">
    <property type="entry name" value="BRCT"/>
    <property type="match status" value="1"/>
</dbReference>
<dbReference type="SMART" id="SM00278">
    <property type="entry name" value="HhH1"/>
    <property type="match status" value="4"/>
</dbReference>
<dbReference type="SMART" id="SM00532">
    <property type="entry name" value="LIGANc"/>
    <property type="match status" value="1"/>
</dbReference>
<dbReference type="SUPFAM" id="SSF52113">
    <property type="entry name" value="BRCT domain"/>
    <property type="match status" value="1"/>
</dbReference>
<dbReference type="SUPFAM" id="SSF56091">
    <property type="entry name" value="DNA ligase/mRNA capping enzyme, catalytic domain"/>
    <property type="match status" value="1"/>
</dbReference>
<dbReference type="SUPFAM" id="SSF50249">
    <property type="entry name" value="Nucleic acid-binding proteins"/>
    <property type="match status" value="1"/>
</dbReference>
<dbReference type="SUPFAM" id="SSF47781">
    <property type="entry name" value="RuvA domain 2-like"/>
    <property type="match status" value="1"/>
</dbReference>
<dbReference type="PROSITE" id="PS50172">
    <property type="entry name" value="BRCT"/>
    <property type="match status" value="1"/>
</dbReference>
<dbReference type="PROSITE" id="PS01055">
    <property type="entry name" value="DNA_LIGASE_N1"/>
    <property type="match status" value="1"/>
</dbReference>
<dbReference type="PROSITE" id="PS01056">
    <property type="entry name" value="DNA_LIGASE_N2"/>
    <property type="match status" value="1"/>
</dbReference>
<proteinExistence type="inferred from homology"/>
<feature type="chain" id="PRO_0000313261" description="DNA ligase">
    <location>
        <begin position="1"/>
        <end position="711"/>
    </location>
</feature>
<feature type="domain" description="BRCT" evidence="1">
    <location>
        <begin position="630"/>
        <end position="711"/>
    </location>
</feature>
<feature type="active site" description="N6-AMP-lysine intermediate" evidence="1">
    <location>
        <position position="121"/>
    </location>
</feature>
<feature type="binding site" evidence="1">
    <location>
        <begin position="39"/>
        <end position="43"/>
    </location>
    <ligand>
        <name>NAD(+)</name>
        <dbReference type="ChEBI" id="CHEBI:57540"/>
    </ligand>
</feature>
<feature type="binding site" evidence="1">
    <location>
        <begin position="88"/>
        <end position="89"/>
    </location>
    <ligand>
        <name>NAD(+)</name>
        <dbReference type="ChEBI" id="CHEBI:57540"/>
    </ligand>
</feature>
<feature type="binding site" evidence="1">
    <location>
        <position position="119"/>
    </location>
    <ligand>
        <name>NAD(+)</name>
        <dbReference type="ChEBI" id="CHEBI:57540"/>
    </ligand>
</feature>
<feature type="binding site" evidence="1">
    <location>
        <position position="142"/>
    </location>
    <ligand>
        <name>NAD(+)</name>
        <dbReference type="ChEBI" id="CHEBI:57540"/>
    </ligand>
</feature>
<feature type="binding site" evidence="1">
    <location>
        <position position="179"/>
    </location>
    <ligand>
        <name>NAD(+)</name>
        <dbReference type="ChEBI" id="CHEBI:57540"/>
    </ligand>
</feature>
<feature type="binding site" evidence="1">
    <location>
        <position position="295"/>
    </location>
    <ligand>
        <name>NAD(+)</name>
        <dbReference type="ChEBI" id="CHEBI:57540"/>
    </ligand>
</feature>
<feature type="binding site" evidence="1">
    <location>
        <position position="319"/>
    </location>
    <ligand>
        <name>NAD(+)</name>
        <dbReference type="ChEBI" id="CHEBI:57540"/>
    </ligand>
</feature>
<feature type="binding site" evidence="1">
    <location>
        <position position="416"/>
    </location>
    <ligand>
        <name>Zn(2+)</name>
        <dbReference type="ChEBI" id="CHEBI:29105"/>
    </ligand>
</feature>
<feature type="binding site" evidence="1">
    <location>
        <position position="419"/>
    </location>
    <ligand>
        <name>Zn(2+)</name>
        <dbReference type="ChEBI" id="CHEBI:29105"/>
    </ligand>
</feature>
<feature type="binding site" evidence="1">
    <location>
        <position position="434"/>
    </location>
    <ligand>
        <name>Zn(2+)</name>
        <dbReference type="ChEBI" id="CHEBI:29105"/>
    </ligand>
</feature>
<feature type="binding site" evidence="1">
    <location>
        <position position="440"/>
    </location>
    <ligand>
        <name>Zn(2+)</name>
        <dbReference type="ChEBI" id="CHEBI:29105"/>
    </ligand>
</feature>
<keyword id="KW-0227">DNA damage</keyword>
<keyword id="KW-0234">DNA repair</keyword>
<keyword id="KW-0235">DNA replication</keyword>
<keyword id="KW-0436">Ligase</keyword>
<keyword id="KW-0460">Magnesium</keyword>
<keyword id="KW-0464">Manganese</keyword>
<keyword id="KW-0479">Metal-binding</keyword>
<keyword id="KW-0520">NAD</keyword>
<keyword id="KW-1185">Reference proteome</keyword>
<keyword id="KW-0862">Zinc</keyword>
<protein>
    <recommendedName>
        <fullName evidence="1">DNA ligase</fullName>
        <ecNumber evidence="1">6.5.1.2</ecNumber>
    </recommendedName>
    <alternativeName>
        <fullName evidence="1">Polydeoxyribonucleotide synthase [NAD(+)]</fullName>
    </alternativeName>
</protein>
<name>DNLJ_HALHL</name>
<gene>
    <name evidence="1" type="primary">ligA</name>
    <name type="ordered locus">Hhal_1878</name>
</gene>
<accession>A1WY80</accession>
<comment type="function">
    <text evidence="1">DNA ligase that catalyzes the formation of phosphodiester linkages between 5'-phosphoryl and 3'-hydroxyl groups in double-stranded DNA using NAD as a coenzyme and as the energy source for the reaction. It is essential for DNA replication and repair of damaged DNA.</text>
</comment>
<comment type="catalytic activity">
    <reaction evidence="1">
        <text>NAD(+) + (deoxyribonucleotide)n-3'-hydroxyl + 5'-phospho-(deoxyribonucleotide)m = (deoxyribonucleotide)n+m + AMP + beta-nicotinamide D-nucleotide.</text>
        <dbReference type="EC" id="6.5.1.2"/>
    </reaction>
</comment>
<comment type="cofactor">
    <cofactor evidence="1">
        <name>Mg(2+)</name>
        <dbReference type="ChEBI" id="CHEBI:18420"/>
    </cofactor>
    <cofactor evidence="1">
        <name>Mn(2+)</name>
        <dbReference type="ChEBI" id="CHEBI:29035"/>
    </cofactor>
</comment>
<comment type="similarity">
    <text evidence="1">Belongs to the NAD-dependent DNA ligase family. LigA subfamily.</text>
</comment>